<sequence length="355" mass="37813">MSGQGKRLMVMAGGTGGHVFPGLAVAHYLMAQGWQVRWLGTADRMEADLVPKHGIEIDFIRISGLRGKGIKALIAAPLRIFNAWRQARAIMKAYKPDVVLGMGGYVSGPGGLAAWSLGIPVVLHEQNGIAGLTNKWLAKIATKVMQAFPGAFPNAEVVGNPVRTDVLALPLPQQRLAGREGPVRVLVVGGSQGARILNQTMPQVAAKLGDSVTIWHQSGKGSQQSVEQAYAEAGQPQHKVTEFIDDMAAAYAWADVVVCRSGALTVSEIAAAGLPALFVPFQHKDRQQYWNALPLEKAGAAKIIEQPQLSVDAVANTLAGWSRETLLTMAERARAASIPDATERVANEVSRAARA</sequence>
<comment type="function">
    <text evidence="1">Cell wall formation. Catalyzes the transfer of a GlcNAc subunit on undecaprenyl-pyrophosphoryl-MurNAc-pentapeptide (lipid intermediate I) to form undecaprenyl-pyrophosphoryl-MurNAc-(pentapeptide)GlcNAc (lipid intermediate II).</text>
</comment>
<comment type="catalytic activity">
    <reaction evidence="1">
        <text>di-trans,octa-cis-undecaprenyl diphospho-N-acetyl-alpha-D-muramoyl-L-alanyl-D-glutamyl-meso-2,6-diaminopimeloyl-D-alanyl-D-alanine + UDP-N-acetyl-alpha-D-glucosamine = di-trans,octa-cis-undecaprenyl diphospho-[N-acetyl-alpha-D-glucosaminyl-(1-&gt;4)]-N-acetyl-alpha-D-muramoyl-L-alanyl-D-glutamyl-meso-2,6-diaminopimeloyl-D-alanyl-D-alanine + UDP + H(+)</text>
        <dbReference type="Rhea" id="RHEA:31227"/>
        <dbReference type="ChEBI" id="CHEBI:15378"/>
        <dbReference type="ChEBI" id="CHEBI:57705"/>
        <dbReference type="ChEBI" id="CHEBI:58223"/>
        <dbReference type="ChEBI" id="CHEBI:61387"/>
        <dbReference type="ChEBI" id="CHEBI:61388"/>
        <dbReference type="EC" id="2.4.1.227"/>
    </reaction>
</comment>
<comment type="pathway">
    <text evidence="1">Cell wall biogenesis; peptidoglycan biosynthesis.</text>
</comment>
<comment type="subcellular location">
    <subcellularLocation>
        <location evidence="1">Cell inner membrane</location>
        <topology evidence="1">Peripheral membrane protein</topology>
        <orientation evidence="1">Cytoplasmic side</orientation>
    </subcellularLocation>
</comment>
<comment type="similarity">
    <text evidence="1">Belongs to the glycosyltransferase 28 family. MurG subfamily.</text>
</comment>
<organism>
    <name type="scientific">Shigella flexneri</name>
    <dbReference type="NCBI Taxonomy" id="623"/>
    <lineage>
        <taxon>Bacteria</taxon>
        <taxon>Pseudomonadati</taxon>
        <taxon>Pseudomonadota</taxon>
        <taxon>Gammaproteobacteria</taxon>
        <taxon>Enterobacterales</taxon>
        <taxon>Enterobacteriaceae</taxon>
        <taxon>Shigella</taxon>
    </lineage>
</organism>
<protein>
    <recommendedName>
        <fullName evidence="1">UDP-N-acetylglucosamine--N-acetylmuramyl-(pentapeptide) pyrophosphoryl-undecaprenol N-acetylglucosamine transferase</fullName>
        <ecNumber evidence="1">2.4.1.227</ecNumber>
    </recommendedName>
    <alternativeName>
        <fullName evidence="1">Undecaprenyl-PP-MurNAc-pentapeptide-UDPGlcNAc GlcNAc transferase</fullName>
    </alternativeName>
</protein>
<accession>Q83MN4</accession>
<gene>
    <name evidence="1" type="primary">murG</name>
    <name type="ordered locus">SF0087</name>
    <name type="ordered locus">S0089</name>
</gene>
<reference key="1">
    <citation type="journal article" date="2002" name="Nucleic Acids Res.">
        <title>Genome sequence of Shigella flexneri 2a: insights into pathogenicity through comparison with genomes of Escherichia coli K12 and O157.</title>
        <authorList>
            <person name="Jin Q."/>
            <person name="Yuan Z."/>
            <person name="Xu J."/>
            <person name="Wang Y."/>
            <person name="Shen Y."/>
            <person name="Lu W."/>
            <person name="Wang J."/>
            <person name="Liu H."/>
            <person name="Yang J."/>
            <person name="Yang F."/>
            <person name="Zhang X."/>
            <person name="Zhang J."/>
            <person name="Yang G."/>
            <person name="Wu H."/>
            <person name="Qu D."/>
            <person name="Dong J."/>
            <person name="Sun L."/>
            <person name="Xue Y."/>
            <person name="Zhao A."/>
            <person name="Gao Y."/>
            <person name="Zhu J."/>
            <person name="Kan B."/>
            <person name="Ding K."/>
            <person name="Chen S."/>
            <person name="Cheng H."/>
            <person name="Yao Z."/>
            <person name="He B."/>
            <person name="Chen R."/>
            <person name="Ma D."/>
            <person name="Qiang B."/>
            <person name="Wen Y."/>
            <person name="Hou Y."/>
            <person name="Yu J."/>
        </authorList>
    </citation>
    <scope>NUCLEOTIDE SEQUENCE [LARGE SCALE GENOMIC DNA]</scope>
    <source>
        <strain>301 / Serotype 2a</strain>
    </source>
</reference>
<reference key="2">
    <citation type="journal article" date="2003" name="Infect. Immun.">
        <title>Complete genome sequence and comparative genomics of Shigella flexneri serotype 2a strain 2457T.</title>
        <authorList>
            <person name="Wei J."/>
            <person name="Goldberg M.B."/>
            <person name="Burland V."/>
            <person name="Venkatesan M.M."/>
            <person name="Deng W."/>
            <person name="Fournier G."/>
            <person name="Mayhew G.F."/>
            <person name="Plunkett G. III"/>
            <person name="Rose D.J."/>
            <person name="Darling A."/>
            <person name="Mau B."/>
            <person name="Perna N.T."/>
            <person name="Payne S.M."/>
            <person name="Runyen-Janecky L.J."/>
            <person name="Zhou S."/>
            <person name="Schwartz D.C."/>
            <person name="Blattner F.R."/>
        </authorList>
    </citation>
    <scope>NUCLEOTIDE SEQUENCE [LARGE SCALE GENOMIC DNA]</scope>
    <source>
        <strain>ATCC 700930 / 2457T / Serotype 2a</strain>
    </source>
</reference>
<proteinExistence type="inferred from homology"/>
<feature type="chain" id="PRO_0000109209" description="UDP-N-acetylglucosamine--N-acetylmuramyl-(pentapeptide) pyrophosphoryl-undecaprenol N-acetylglucosamine transferase">
    <location>
        <begin position="1"/>
        <end position="355"/>
    </location>
</feature>
<feature type="binding site" evidence="1">
    <location>
        <begin position="15"/>
        <end position="17"/>
    </location>
    <ligand>
        <name>UDP-N-acetyl-alpha-D-glucosamine</name>
        <dbReference type="ChEBI" id="CHEBI:57705"/>
    </ligand>
</feature>
<feature type="binding site" evidence="1">
    <location>
        <position position="127"/>
    </location>
    <ligand>
        <name>UDP-N-acetyl-alpha-D-glucosamine</name>
        <dbReference type="ChEBI" id="CHEBI:57705"/>
    </ligand>
</feature>
<feature type="binding site" evidence="1">
    <location>
        <position position="163"/>
    </location>
    <ligand>
        <name>UDP-N-acetyl-alpha-D-glucosamine</name>
        <dbReference type="ChEBI" id="CHEBI:57705"/>
    </ligand>
</feature>
<feature type="binding site" evidence="1">
    <location>
        <position position="191"/>
    </location>
    <ligand>
        <name>UDP-N-acetyl-alpha-D-glucosamine</name>
        <dbReference type="ChEBI" id="CHEBI:57705"/>
    </ligand>
</feature>
<feature type="binding site" evidence="1">
    <location>
        <position position="244"/>
    </location>
    <ligand>
        <name>UDP-N-acetyl-alpha-D-glucosamine</name>
        <dbReference type="ChEBI" id="CHEBI:57705"/>
    </ligand>
</feature>
<feature type="binding site" evidence="1">
    <location>
        <begin position="263"/>
        <end position="268"/>
    </location>
    <ligand>
        <name>UDP-N-acetyl-alpha-D-glucosamine</name>
        <dbReference type="ChEBI" id="CHEBI:57705"/>
    </ligand>
</feature>
<feature type="binding site" evidence="1">
    <location>
        <position position="288"/>
    </location>
    <ligand>
        <name>UDP-N-acetyl-alpha-D-glucosamine</name>
        <dbReference type="ChEBI" id="CHEBI:57705"/>
    </ligand>
</feature>
<name>MURG_SHIFL</name>
<dbReference type="EC" id="2.4.1.227" evidence="1"/>
<dbReference type="EMBL" id="AE005674">
    <property type="protein sequence ID" value="AAN41752.1"/>
    <property type="molecule type" value="Genomic_DNA"/>
</dbReference>
<dbReference type="EMBL" id="AE014073">
    <property type="protein sequence ID" value="AAP15633.1"/>
    <property type="molecule type" value="Genomic_DNA"/>
</dbReference>
<dbReference type="RefSeq" id="NP_706045.1">
    <property type="nucleotide sequence ID" value="NC_004337.2"/>
</dbReference>
<dbReference type="RefSeq" id="WP_000016582.1">
    <property type="nucleotide sequence ID" value="NZ_WPGW01000007.1"/>
</dbReference>
<dbReference type="SMR" id="Q83MN4"/>
<dbReference type="STRING" id="198214.SF0087"/>
<dbReference type="PaxDb" id="198214-SF0087"/>
<dbReference type="GeneID" id="1024509"/>
<dbReference type="KEGG" id="sfl:SF0087"/>
<dbReference type="KEGG" id="sfx:S0089"/>
<dbReference type="PATRIC" id="fig|198214.7.peg.102"/>
<dbReference type="HOGENOM" id="CLU_037404_2_0_6"/>
<dbReference type="UniPathway" id="UPA00219"/>
<dbReference type="Proteomes" id="UP000001006">
    <property type="component" value="Chromosome"/>
</dbReference>
<dbReference type="Proteomes" id="UP000002673">
    <property type="component" value="Chromosome"/>
</dbReference>
<dbReference type="GO" id="GO:0005886">
    <property type="term" value="C:plasma membrane"/>
    <property type="evidence" value="ECO:0007669"/>
    <property type="project" value="UniProtKB-SubCell"/>
</dbReference>
<dbReference type="GO" id="GO:0051991">
    <property type="term" value="F:UDP-N-acetyl-D-glucosamine:N-acetylmuramoyl-L-alanyl-D-glutamyl-meso-2,6-diaminopimelyl-D-alanyl-D-alanine-diphosphoundecaprenol 4-beta-N-acetylglucosaminlytransferase activity"/>
    <property type="evidence" value="ECO:0007669"/>
    <property type="project" value="RHEA"/>
</dbReference>
<dbReference type="GO" id="GO:0050511">
    <property type="term" value="F:undecaprenyldiphospho-muramoylpentapeptide beta-N-acetylglucosaminyltransferase activity"/>
    <property type="evidence" value="ECO:0007669"/>
    <property type="project" value="UniProtKB-UniRule"/>
</dbReference>
<dbReference type="GO" id="GO:0005975">
    <property type="term" value="P:carbohydrate metabolic process"/>
    <property type="evidence" value="ECO:0007669"/>
    <property type="project" value="InterPro"/>
</dbReference>
<dbReference type="GO" id="GO:0051301">
    <property type="term" value="P:cell division"/>
    <property type="evidence" value="ECO:0007669"/>
    <property type="project" value="UniProtKB-KW"/>
</dbReference>
<dbReference type="GO" id="GO:0071555">
    <property type="term" value="P:cell wall organization"/>
    <property type="evidence" value="ECO:0007669"/>
    <property type="project" value="UniProtKB-KW"/>
</dbReference>
<dbReference type="GO" id="GO:0030259">
    <property type="term" value="P:lipid glycosylation"/>
    <property type="evidence" value="ECO:0007669"/>
    <property type="project" value="UniProtKB-UniRule"/>
</dbReference>
<dbReference type="GO" id="GO:0009252">
    <property type="term" value="P:peptidoglycan biosynthetic process"/>
    <property type="evidence" value="ECO:0007669"/>
    <property type="project" value="UniProtKB-UniRule"/>
</dbReference>
<dbReference type="GO" id="GO:0008360">
    <property type="term" value="P:regulation of cell shape"/>
    <property type="evidence" value="ECO:0007669"/>
    <property type="project" value="UniProtKB-KW"/>
</dbReference>
<dbReference type="CDD" id="cd03785">
    <property type="entry name" value="GT28_MurG"/>
    <property type="match status" value="1"/>
</dbReference>
<dbReference type="FunFam" id="3.40.50.2000:FF:000016">
    <property type="entry name" value="UDP-N-acetylglucosamine--N-acetylmuramyl-(pentapeptide) pyrophosphoryl-undecaprenol N-acetylglucosamine transferase"/>
    <property type="match status" value="1"/>
</dbReference>
<dbReference type="FunFam" id="3.40.50.2000:FF:000018">
    <property type="entry name" value="UDP-N-acetylglucosamine--N-acetylmuramyl-(pentapeptide) pyrophosphoryl-undecaprenol N-acetylglucosamine transferase"/>
    <property type="match status" value="1"/>
</dbReference>
<dbReference type="Gene3D" id="3.40.50.2000">
    <property type="entry name" value="Glycogen Phosphorylase B"/>
    <property type="match status" value="2"/>
</dbReference>
<dbReference type="HAMAP" id="MF_00033">
    <property type="entry name" value="MurG"/>
    <property type="match status" value="1"/>
</dbReference>
<dbReference type="InterPro" id="IPR006009">
    <property type="entry name" value="GlcNAc_MurG"/>
</dbReference>
<dbReference type="InterPro" id="IPR007235">
    <property type="entry name" value="Glyco_trans_28_C"/>
</dbReference>
<dbReference type="InterPro" id="IPR004276">
    <property type="entry name" value="GlycoTrans_28_N"/>
</dbReference>
<dbReference type="NCBIfam" id="TIGR01133">
    <property type="entry name" value="murG"/>
    <property type="match status" value="1"/>
</dbReference>
<dbReference type="PANTHER" id="PTHR21015:SF22">
    <property type="entry name" value="GLYCOSYLTRANSFERASE"/>
    <property type="match status" value="1"/>
</dbReference>
<dbReference type="PANTHER" id="PTHR21015">
    <property type="entry name" value="UDP-N-ACETYLGLUCOSAMINE--N-ACETYLMURAMYL-(PENTAPEPTIDE) PYROPHOSPHORYL-UNDECAPRENOL N-ACETYLGLUCOSAMINE TRANSFERASE 1"/>
    <property type="match status" value="1"/>
</dbReference>
<dbReference type="Pfam" id="PF04101">
    <property type="entry name" value="Glyco_tran_28_C"/>
    <property type="match status" value="1"/>
</dbReference>
<dbReference type="Pfam" id="PF03033">
    <property type="entry name" value="Glyco_transf_28"/>
    <property type="match status" value="1"/>
</dbReference>
<dbReference type="SUPFAM" id="SSF53756">
    <property type="entry name" value="UDP-Glycosyltransferase/glycogen phosphorylase"/>
    <property type="match status" value="1"/>
</dbReference>
<keyword id="KW-0131">Cell cycle</keyword>
<keyword id="KW-0132">Cell division</keyword>
<keyword id="KW-0997">Cell inner membrane</keyword>
<keyword id="KW-1003">Cell membrane</keyword>
<keyword id="KW-0133">Cell shape</keyword>
<keyword id="KW-0961">Cell wall biogenesis/degradation</keyword>
<keyword id="KW-0328">Glycosyltransferase</keyword>
<keyword id="KW-0472">Membrane</keyword>
<keyword id="KW-0573">Peptidoglycan synthesis</keyword>
<keyword id="KW-1185">Reference proteome</keyword>
<keyword id="KW-0808">Transferase</keyword>
<evidence type="ECO:0000255" key="1">
    <source>
        <dbReference type="HAMAP-Rule" id="MF_00033"/>
    </source>
</evidence>